<dbReference type="EMBL" id="AE000516">
    <property type="protein sequence ID" value="AAK47104.1"/>
    <property type="molecule type" value="Genomic_DNA"/>
</dbReference>
<dbReference type="PIR" id="F70532">
    <property type="entry name" value="F70532"/>
</dbReference>
<dbReference type="RefSeq" id="WP_003900558.1">
    <property type="nucleotide sequence ID" value="NZ_KK341227.1"/>
</dbReference>
<dbReference type="SMR" id="P9WNH2"/>
<dbReference type="ESTHER" id="myctu-YR15">
    <property type="family name" value="Epoxide_hydrolase"/>
</dbReference>
<dbReference type="KEGG" id="mtc:MT2788"/>
<dbReference type="PATRIC" id="fig|83331.31.peg.3002"/>
<dbReference type="HOGENOM" id="CLU_020336_13_2_11"/>
<dbReference type="Proteomes" id="UP000001020">
    <property type="component" value="Chromosome"/>
</dbReference>
<dbReference type="GO" id="GO:0016020">
    <property type="term" value="C:membrane"/>
    <property type="evidence" value="ECO:0007669"/>
    <property type="project" value="TreeGrafter"/>
</dbReference>
<dbReference type="GO" id="GO:0047372">
    <property type="term" value="F:monoacylglycerol lipase activity"/>
    <property type="evidence" value="ECO:0007669"/>
    <property type="project" value="TreeGrafter"/>
</dbReference>
<dbReference type="GO" id="GO:0046464">
    <property type="term" value="P:acylglycerol catabolic process"/>
    <property type="evidence" value="ECO:0007669"/>
    <property type="project" value="TreeGrafter"/>
</dbReference>
<dbReference type="FunFam" id="3.40.50.1820:FF:000327">
    <property type="entry name" value="Alpha/beta hydrolase"/>
    <property type="match status" value="1"/>
</dbReference>
<dbReference type="Gene3D" id="3.40.50.1820">
    <property type="entry name" value="alpha/beta hydrolase"/>
    <property type="match status" value="1"/>
</dbReference>
<dbReference type="InterPro" id="IPR000073">
    <property type="entry name" value="AB_hydrolase_1"/>
</dbReference>
<dbReference type="InterPro" id="IPR029058">
    <property type="entry name" value="AB_hydrolase_fold"/>
</dbReference>
<dbReference type="InterPro" id="IPR050266">
    <property type="entry name" value="AB_hydrolase_sf"/>
</dbReference>
<dbReference type="InterPro" id="IPR000639">
    <property type="entry name" value="Epox_hydrolase-like"/>
</dbReference>
<dbReference type="PANTHER" id="PTHR43798:SF33">
    <property type="entry name" value="HYDROLASE, PUTATIVE (AFU_ORTHOLOGUE AFUA_2G14860)-RELATED"/>
    <property type="match status" value="1"/>
</dbReference>
<dbReference type="PANTHER" id="PTHR43798">
    <property type="entry name" value="MONOACYLGLYCEROL LIPASE"/>
    <property type="match status" value="1"/>
</dbReference>
<dbReference type="Pfam" id="PF00561">
    <property type="entry name" value="Abhydrolase_1"/>
    <property type="match status" value="1"/>
</dbReference>
<dbReference type="PRINTS" id="PR00111">
    <property type="entry name" value="ABHYDROLASE"/>
</dbReference>
<dbReference type="PRINTS" id="PR00412">
    <property type="entry name" value="EPOXHYDRLASE"/>
</dbReference>
<dbReference type="SUPFAM" id="SSF53474">
    <property type="entry name" value="alpha/beta-Hydrolases"/>
    <property type="match status" value="1"/>
</dbReference>
<keyword id="KW-0378">Hydrolase</keyword>
<keyword id="KW-1185">Reference proteome</keyword>
<accession>P9WNH2</accession>
<accession>L0TD47</accession>
<accession>O07214</accession>
<accession>P0A572</accession>
<accession>P28176</accession>
<protein>
    <recommendedName>
        <fullName>Uncharacterized protein MT2788</fullName>
    </recommendedName>
</protein>
<name>Y2715_MYCTO</name>
<proteinExistence type="inferred from homology"/>
<evidence type="ECO:0000250" key="1"/>
<evidence type="ECO:0000305" key="2"/>
<sequence length="341" mass="36933">MTERKRNLRPVRDVAPPTLQFRTVHGYRRAFRIAGSGPAILLIHGIGDNSTTWNGVHAKLAQRFTVIAPDLLGHGQSDKPRADYSVAAYANGMRDLLSVLDIERVTIVGHSLGGGVAMQFAYQFPQLVDRLILVSAGGVTKDVNIVFRLASLPMGSEAMALLRLPLVLPAVQIAGRIVGKAIGTTSLGHDLPNVLRILDDLPEPTASAAFGRTLRAVVDWRGQMVTMLDRCYLTEAIPVQIIWGTKDVVLPVRHAHMAHAAMPGSQLEIFEGSGHFPFHDDPARFIDIVERFMDTTEPAEYDQAALRALLRRGGGEATVTGSADTRVAVLNAIGSNERSAT</sequence>
<organism>
    <name type="scientific">Mycobacterium tuberculosis (strain CDC 1551 / Oshkosh)</name>
    <dbReference type="NCBI Taxonomy" id="83331"/>
    <lineage>
        <taxon>Bacteria</taxon>
        <taxon>Bacillati</taxon>
        <taxon>Actinomycetota</taxon>
        <taxon>Actinomycetes</taxon>
        <taxon>Mycobacteriales</taxon>
        <taxon>Mycobacteriaceae</taxon>
        <taxon>Mycobacterium</taxon>
        <taxon>Mycobacterium tuberculosis complex</taxon>
    </lineage>
</organism>
<feature type="chain" id="PRO_0000427127" description="Uncharacterized protein MT2788">
    <location>
        <begin position="1"/>
        <end position="341"/>
    </location>
</feature>
<feature type="active site" evidence="1">
    <location>
        <position position="111"/>
    </location>
</feature>
<feature type="active site" evidence="1">
    <location>
        <position position="247"/>
    </location>
</feature>
<feature type="active site" evidence="1">
    <location>
        <position position="275"/>
    </location>
</feature>
<gene>
    <name type="ordered locus">MT2788</name>
</gene>
<comment type="similarity">
    <text evidence="2">Belongs to the DmpD/TodF/XylF esterase family.</text>
</comment>
<reference key="1">
    <citation type="journal article" date="2002" name="J. Bacteriol.">
        <title>Whole-genome comparison of Mycobacterium tuberculosis clinical and laboratory strains.</title>
        <authorList>
            <person name="Fleischmann R.D."/>
            <person name="Alland D."/>
            <person name="Eisen J.A."/>
            <person name="Carpenter L."/>
            <person name="White O."/>
            <person name="Peterson J.D."/>
            <person name="DeBoy R.T."/>
            <person name="Dodson R.J."/>
            <person name="Gwinn M.L."/>
            <person name="Haft D.H."/>
            <person name="Hickey E.K."/>
            <person name="Kolonay J.F."/>
            <person name="Nelson W.C."/>
            <person name="Umayam L.A."/>
            <person name="Ermolaeva M.D."/>
            <person name="Salzberg S.L."/>
            <person name="Delcher A."/>
            <person name="Utterback T.R."/>
            <person name="Weidman J.F."/>
            <person name="Khouri H.M."/>
            <person name="Gill J."/>
            <person name="Mikula A."/>
            <person name="Bishai W."/>
            <person name="Jacobs W.R. Jr."/>
            <person name="Venter J.C."/>
            <person name="Fraser C.M."/>
        </authorList>
    </citation>
    <scope>NUCLEOTIDE SEQUENCE [LARGE SCALE GENOMIC DNA]</scope>
    <source>
        <strain>CDC 1551 / Oshkosh</strain>
    </source>
</reference>